<dbReference type="EC" id="2.6.1.16"/>
<dbReference type="EMBL" id="X94753">
    <property type="protein sequence ID" value="CAA64380.1"/>
    <property type="molecule type" value="Genomic_DNA"/>
</dbReference>
<dbReference type="EMBL" id="CP017625">
    <property type="protein sequence ID" value="AOW28265.1"/>
    <property type="molecule type" value="Genomic_DNA"/>
</dbReference>
<dbReference type="PIR" id="JC6012">
    <property type="entry name" value="JC6012"/>
</dbReference>
<dbReference type="RefSeq" id="XP_721697.2">
    <property type="nucleotide sequence ID" value="XM_716604.2"/>
</dbReference>
<dbReference type="PDB" id="2POC">
    <property type="method" value="X-ray"/>
    <property type="resolution" value="1.80 A"/>
    <property type="chains" value="A/B/C/D=347-713"/>
</dbReference>
<dbReference type="PDB" id="2PUT">
    <property type="method" value="X-ray"/>
    <property type="resolution" value="1.90 A"/>
    <property type="chains" value="A/B/C/D=347-713"/>
</dbReference>
<dbReference type="PDB" id="2PUV">
    <property type="method" value="X-ray"/>
    <property type="resolution" value="1.90 A"/>
    <property type="chains" value="A/B/C/D=347-713"/>
</dbReference>
<dbReference type="PDB" id="2PUW">
    <property type="method" value="X-ray"/>
    <property type="resolution" value="3.15 A"/>
    <property type="chains" value="A/B=347-713"/>
</dbReference>
<dbReference type="PDBsum" id="2POC"/>
<dbReference type="PDBsum" id="2PUT"/>
<dbReference type="PDBsum" id="2PUV"/>
<dbReference type="PDBsum" id="2PUW"/>
<dbReference type="SMR" id="P53704"/>
<dbReference type="BioGRID" id="1219651">
    <property type="interactions" value="6"/>
</dbReference>
<dbReference type="FunCoup" id="P53704">
    <property type="interactions" value="1123"/>
</dbReference>
<dbReference type="STRING" id="237561.P53704"/>
<dbReference type="BindingDB" id="P53704"/>
<dbReference type="EnsemblFungi" id="C3_02280C_A-T">
    <property type="protein sequence ID" value="C3_02280C_A-T-p1"/>
    <property type="gene ID" value="C3_02280C_A"/>
</dbReference>
<dbReference type="GeneID" id="3636557"/>
<dbReference type="KEGG" id="cal:CAALFM_C302280CA"/>
<dbReference type="CGD" id="CAL0000176261">
    <property type="gene designation" value="GFA1"/>
</dbReference>
<dbReference type="VEuPathDB" id="FungiDB:C3_02280C_A"/>
<dbReference type="eggNOG" id="KOG1268">
    <property type="taxonomic scope" value="Eukaryota"/>
</dbReference>
<dbReference type="HOGENOM" id="CLU_012520_5_2_1"/>
<dbReference type="InParanoid" id="P53704"/>
<dbReference type="OrthoDB" id="15235at2759"/>
<dbReference type="BioCyc" id="MetaCyc:MONOMER-13172"/>
<dbReference type="BRENDA" id="2.6.1.16">
    <property type="organism ID" value="1096"/>
</dbReference>
<dbReference type="UniPathway" id="UPA00113">
    <property type="reaction ID" value="UER00528"/>
</dbReference>
<dbReference type="EvolutionaryTrace" id="P53704"/>
<dbReference type="Proteomes" id="UP000000559">
    <property type="component" value="Chromosome 3"/>
</dbReference>
<dbReference type="GO" id="GO:0097367">
    <property type="term" value="F:carbohydrate derivative binding"/>
    <property type="evidence" value="ECO:0007669"/>
    <property type="project" value="InterPro"/>
</dbReference>
<dbReference type="GO" id="GO:0004360">
    <property type="term" value="F:glutamine-fructose-6-phosphate transaminase (isomerizing) activity"/>
    <property type="evidence" value="ECO:0000314"/>
    <property type="project" value="CGD"/>
</dbReference>
<dbReference type="GO" id="GO:0006031">
    <property type="term" value="P:chitin biosynthetic process"/>
    <property type="evidence" value="ECO:0000315"/>
    <property type="project" value="CGD"/>
</dbReference>
<dbReference type="GO" id="GO:0006002">
    <property type="term" value="P:fructose 6-phosphate metabolic process"/>
    <property type="evidence" value="ECO:0000318"/>
    <property type="project" value="GO_Central"/>
</dbReference>
<dbReference type="GO" id="GO:0006042">
    <property type="term" value="P:glucosamine biosynthetic process"/>
    <property type="evidence" value="ECO:0000314"/>
    <property type="project" value="CGD"/>
</dbReference>
<dbReference type="GO" id="GO:0030448">
    <property type="term" value="P:hyphal growth"/>
    <property type="evidence" value="ECO:0000315"/>
    <property type="project" value="CGD"/>
</dbReference>
<dbReference type="GO" id="GO:0006487">
    <property type="term" value="P:protein N-linked glycosylation"/>
    <property type="evidence" value="ECO:0000318"/>
    <property type="project" value="GO_Central"/>
</dbReference>
<dbReference type="GO" id="GO:0006048">
    <property type="term" value="P:UDP-N-acetylglucosamine biosynthetic process"/>
    <property type="evidence" value="ECO:0007669"/>
    <property type="project" value="UniProtKB-UniPathway"/>
</dbReference>
<dbReference type="GO" id="GO:0006047">
    <property type="term" value="P:UDP-N-acetylglucosamine metabolic process"/>
    <property type="evidence" value="ECO:0000318"/>
    <property type="project" value="GO_Central"/>
</dbReference>
<dbReference type="CDD" id="cd00714">
    <property type="entry name" value="GFAT"/>
    <property type="match status" value="1"/>
</dbReference>
<dbReference type="CDD" id="cd05008">
    <property type="entry name" value="SIS_GlmS_GlmD_1"/>
    <property type="match status" value="1"/>
</dbReference>
<dbReference type="CDD" id="cd05009">
    <property type="entry name" value="SIS_GlmS_GlmD_2"/>
    <property type="match status" value="1"/>
</dbReference>
<dbReference type="FunFam" id="3.40.50.10490:FF:000001">
    <property type="entry name" value="Glutamine--fructose-6-phosphate aminotransferase [isomerizing]"/>
    <property type="match status" value="1"/>
</dbReference>
<dbReference type="Gene3D" id="3.40.50.10490">
    <property type="entry name" value="Glucose-6-phosphate isomerase like protein, domain 1"/>
    <property type="match status" value="2"/>
</dbReference>
<dbReference type="Gene3D" id="3.60.20.10">
    <property type="entry name" value="Glutamine Phosphoribosylpyrophosphate, subunit 1, domain 1"/>
    <property type="match status" value="1"/>
</dbReference>
<dbReference type="InterPro" id="IPR017932">
    <property type="entry name" value="GATase_2_dom"/>
</dbReference>
<dbReference type="InterPro" id="IPR047084">
    <property type="entry name" value="GFAT_N"/>
</dbReference>
<dbReference type="InterPro" id="IPR035466">
    <property type="entry name" value="GlmS/AgaS_SIS"/>
</dbReference>
<dbReference type="InterPro" id="IPR035490">
    <property type="entry name" value="GlmS/FrlB_SIS"/>
</dbReference>
<dbReference type="InterPro" id="IPR029055">
    <property type="entry name" value="Ntn_hydrolases_N"/>
</dbReference>
<dbReference type="InterPro" id="IPR001347">
    <property type="entry name" value="SIS_dom"/>
</dbReference>
<dbReference type="InterPro" id="IPR046348">
    <property type="entry name" value="SIS_dom_sf"/>
</dbReference>
<dbReference type="NCBIfam" id="NF001484">
    <property type="entry name" value="PRK00331.1"/>
    <property type="match status" value="1"/>
</dbReference>
<dbReference type="PANTHER" id="PTHR10937">
    <property type="entry name" value="GLUCOSAMINE--FRUCTOSE-6-PHOSPHATE AMINOTRANSFERASE, ISOMERIZING"/>
    <property type="match status" value="1"/>
</dbReference>
<dbReference type="PANTHER" id="PTHR10937:SF0">
    <property type="entry name" value="GLUTAMINE--FRUCTOSE-6-PHOSPHATE TRANSAMINASE (ISOMERIZING)"/>
    <property type="match status" value="1"/>
</dbReference>
<dbReference type="Pfam" id="PF13522">
    <property type="entry name" value="GATase_6"/>
    <property type="match status" value="1"/>
</dbReference>
<dbReference type="Pfam" id="PF01380">
    <property type="entry name" value="SIS"/>
    <property type="match status" value="2"/>
</dbReference>
<dbReference type="SUPFAM" id="SSF56235">
    <property type="entry name" value="N-terminal nucleophile aminohydrolases (Ntn hydrolases)"/>
    <property type="match status" value="1"/>
</dbReference>
<dbReference type="SUPFAM" id="SSF53697">
    <property type="entry name" value="SIS domain"/>
    <property type="match status" value="1"/>
</dbReference>
<dbReference type="PROSITE" id="PS51278">
    <property type="entry name" value="GATASE_TYPE_2"/>
    <property type="match status" value="1"/>
</dbReference>
<dbReference type="PROSITE" id="PS51464">
    <property type="entry name" value="SIS"/>
    <property type="match status" value="2"/>
</dbReference>
<evidence type="ECO:0000250" key="1"/>
<evidence type="ECO:0000255" key="2">
    <source>
        <dbReference type="PROSITE-ProRule" id="PRU00609"/>
    </source>
</evidence>
<evidence type="ECO:0000255" key="3">
    <source>
        <dbReference type="PROSITE-ProRule" id="PRU00797"/>
    </source>
</evidence>
<evidence type="ECO:0000269" key="4">
    <source>
    </source>
</evidence>
<evidence type="ECO:0000305" key="5"/>
<evidence type="ECO:0007829" key="6">
    <source>
        <dbReference type="PDB" id="2POC"/>
    </source>
</evidence>
<evidence type="ECO:0007829" key="7">
    <source>
        <dbReference type="PDB" id="2PUW"/>
    </source>
</evidence>
<organism>
    <name type="scientific">Candida albicans (strain SC5314 / ATCC MYA-2876)</name>
    <name type="common">Yeast</name>
    <dbReference type="NCBI Taxonomy" id="237561"/>
    <lineage>
        <taxon>Eukaryota</taxon>
        <taxon>Fungi</taxon>
        <taxon>Dikarya</taxon>
        <taxon>Ascomycota</taxon>
        <taxon>Saccharomycotina</taxon>
        <taxon>Pichiomycetes</taxon>
        <taxon>Debaryomycetaceae</taxon>
        <taxon>Candida/Lodderomyces clade</taxon>
        <taxon>Candida</taxon>
    </lineage>
</organism>
<name>GFA1_CANAL</name>
<feature type="initiator methionine" description="Removed" evidence="1">
    <location>
        <position position="1"/>
    </location>
</feature>
<feature type="chain" id="PRO_0000135287" description="Glutamine--fructose-6-phosphate aminotransferase [isomerizing]">
    <location>
        <begin position="2"/>
        <end position="713"/>
    </location>
</feature>
<feature type="domain" description="Glutamine amidotransferase type-2" evidence="2">
    <location>
        <begin position="2"/>
        <end position="316"/>
    </location>
</feature>
<feature type="domain" description="SIS 1" evidence="3">
    <location>
        <begin position="389"/>
        <end position="528"/>
    </location>
</feature>
<feature type="domain" description="SIS 2" evidence="3">
    <location>
        <begin position="561"/>
        <end position="703"/>
    </location>
</feature>
<feature type="active site" description="For GATase activity" evidence="1">
    <location>
        <position position="2"/>
    </location>
</feature>
<feature type="sequence conflict" description="In Ref. 1; CAA64380." evidence="5" ref="1">
    <original>K</original>
    <variation>R</variation>
    <location>
        <position position="16"/>
    </location>
</feature>
<feature type="sequence conflict" description="In Ref. 1; CAA64380." evidence="5" ref="1">
    <original>I</original>
    <variation>V</variation>
    <location>
        <position position="63"/>
    </location>
</feature>
<feature type="helix" evidence="6">
    <location>
        <begin position="354"/>
        <end position="360"/>
    </location>
</feature>
<feature type="helix" evidence="6">
    <location>
        <begin position="362"/>
        <end position="370"/>
    </location>
</feature>
<feature type="turn" evidence="6">
    <location>
        <begin position="371"/>
        <end position="373"/>
    </location>
</feature>
<feature type="turn" evidence="6">
    <location>
        <begin position="376"/>
        <end position="379"/>
    </location>
</feature>
<feature type="turn" evidence="6">
    <location>
        <begin position="384"/>
        <end position="386"/>
    </location>
</feature>
<feature type="helix" evidence="6">
    <location>
        <begin position="387"/>
        <end position="389"/>
    </location>
</feature>
<feature type="helix" evidence="6">
    <location>
        <begin position="390"/>
        <end position="394"/>
    </location>
</feature>
<feature type="strand" evidence="6">
    <location>
        <begin position="396"/>
        <end position="403"/>
    </location>
</feature>
<feature type="helix" evidence="6">
    <location>
        <begin position="405"/>
        <end position="422"/>
    </location>
</feature>
<feature type="strand" evidence="6">
    <location>
        <begin position="426"/>
        <end position="430"/>
    </location>
</feature>
<feature type="helix" evidence="6">
    <location>
        <begin position="431"/>
        <end position="436"/>
    </location>
</feature>
<feature type="strand" evidence="6">
    <location>
        <begin position="445"/>
        <end position="454"/>
    </location>
</feature>
<feature type="helix" evidence="6">
    <location>
        <begin position="457"/>
        <end position="468"/>
    </location>
</feature>
<feature type="strand" evidence="6">
    <location>
        <begin position="472"/>
        <end position="479"/>
    </location>
</feature>
<feature type="helix" evidence="6">
    <location>
        <begin position="483"/>
        <end position="487"/>
    </location>
</feature>
<feature type="strand" evidence="6">
    <location>
        <begin position="488"/>
        <end position="493"/>
    </location>
</feature>
<feature type="strand" evidence="6">
    <location>
        <begin position="501"/>
        <end position="503"/>
    </location>
</feature>
<feature type="helix" evidence="6">
    <location>
        <begin position="506"/>
        <end position="522"/>
    </location>
</feature>
<feature type="turn" evidence="6">
    <location>
        <begin position="523"/>
        <end position="525"/>
    </location>
</feature>
<feature type="turn" evidence="7">
    <location>
        <begin position="527"/>
        <end position="529"/>
    </location>
</feature>
<feature type="helix" evidence="6">
    <location>
        <begin position="530"/>
        <end position="550"/>
    </location>
</feature>
<feature type="helix" evidence="6">
    <location>
        <begin position="551"/>
        <end position="553"/>
    </location>
</feature>
<feature type="helix" evidence="6">
    <location>
        <begin position="554"/>
        <end position="562"/>
    </location>
</feature>
<feature type="helix" evidence="6">
    <location>
        <begin position="564"/>
        <end position="567"/>
    </location>
</feature>
<feature type="strand" evidence="6">
    <location>
        <begin position="569"/>
        <end position="575"/>
    </location>
</feature>
<feature type="helix" evidence="6">
    <location>
        <begin position="577"/>
        <end position="579"/>
    </location>
</feature>
<feature type="helix" evidence="6">
    <location>
        <begin position="580"/>
        <end position="594"/>
    </location>
</feature>
<feature type="strand" evidence="6">
    <location>
        <begin position="597"/>
        <end position="602"/>
    </location>
</feature>
<feature type="strand" evidence="6">
    <location>
        <begin position="607"/>
        <end position="609"/>
    </location>
</feature>
<feature type="helix" evidence="6">
    <location>
        <begin position="610"/>
        <end position="612"/>
    </location>
</feature>
<feature type="strand" evidence="6">
    <location>
        <begin position="620"/>
        <end position="623"/>
    </location>
</feature>
<feature type="helix" evidence="6">
    <location>
        <begin position="626"/>
        <end position="628"/>
    </location>
</feature>
<feature type="helix" evidence="6">
    <location>
        <begin position="631"/>
        <end position="642"/>
    </location>
</feature>
<feature type="strand" evidence="6">
    <location>
        <begin position="648"/>
        <end position="652"/>
    </location>
</feature>
<feature type="strand" evidence="6">
    <location>
        <begin position="665"/>
        <end position="669"/>
    </location>
</feature>
<feature type="helix" evidence="6">
    <location>
        <begin position="674"/>
        <end position="676"/>
    </location>
</feature>
<feature type="helix" evidence="6">
    <location>
        <begin position="677"/>
        <end position="695"/>
    </location>
</feature>
<gene>
    <name type="primary">GFA1</name>
    <name type="ordered locus">CAALFM_C302280CA</name>
    <name type="ORF">CaO19.1618</name>
</gene>
<keyword id="KW-0002">3D-structure</keyword>
<keyword id="KW-0032">Aminotransferase</keyword>
<keyword id="KW-0315">Glutamine amidotransferase</keyword>
<keyword id="KW-1185">Reference proteome</keyword>
<keyword id="KW-0677">Repeat</keyword>
<keyword id="KW-0808">Transferase</keyword>
<protein>
    <recommendedName>
        <fullName>Glutamine--fructose-6-phosphate aminotransferase [isomerizing]</fullName>
        <shortName>GFAT</shortName>
        <ecNumber>2.6.1.16</ecNumber>
    </recommendedName>
    <alternativeName>
        <fullName>D-fructose-6-phosphate amidotransferase</fullName>
    </alternativeName>
    <alternativeName>
        <fullName>Hexosephosphate aminotransferase</fullName>
    </alternativeName>
</protein>
<accession>P53704</accession>
<accession>A0A1D8PJE2</accession>
<accession>Q5AJV2</accession>
<comment type="function">
    <text>Involved in amino sugar synthesis (formation of chitin, supplies the amino sugars of asparagine-linked oligosaccharides of glycoproteins).</text>
</comment>
<comment type="catalytic activity">
    <reaction>
        <text>D-fructose 6-phosphate + L-glutamine = D-glucosamine 6-phosphate + L-glutamate</text>
        <dbReference type="Rhea" id="RHEA:13237"/>
        <dbReference type="ChEBI" id="CHEBI:29985"/>
        <dbReference type="ChEBI" id="CHEBI:58359"/>
        <dbReference type="ChEBI" id="CHEBI:58725"/>
        <dbReference type="ChEBI" id="CHEBI:61527"/>
        <dbReference type="EC" id="2.6.1.16"/>
    </reaction>
</comment>
<comment type="pathway">
    <text>Nucleotide-sugar biosynthesis; UDP-N-acetyl-alpha-D-glucosamine biosynthesis; alpha-D-glucosamine 6-phosphate from D-fructose 6-phosphate: step 1/1.</text>
</comment>
<comment type="subunit">
    <text evidence="4">Homotetramer.</text>
</comment>
<reference key="1">
    <citation type="journal article" date="1996" name="J. Bacteriol.">
        <title>Isolation and characterization of the GFA1 gene encoding the glutamine:fructose-6-phosphate amidotransferase of Candida albicans.</title>
        <authorList>
            <person name="Smith R.J."/>
            <person name="Milewski S."/>
            <person name="Brown A.J."/>
            <person name="Gooday G.W."/>
        </authorList>
    </citation>
    <scope>NUCLEOTIDE SEQUENCE [GENOMIC DNA]</scope>
    <source>
        <strain>ATCC 10261 / CBS 2718 / NBRC 1061</strain>
    </source>
</reference>
<reference key="2">
    <citation type="journal article" date="2004" name="Proc. Natl. Acad. Sci. U.S.A.">
        <title>The diploid genome sequence of Candida albicans.</title>
        <authorList>
            <person name="Jones T."/>
            <person name="Federspiel N.A."/>
            <person name="Chibana H."/>
            <person name="Dungan J."/>
            <person name="Kalman S."/>
            <person name="Magee B.B."/>
            <person name="Newport G."/>
            <person name="Thorstenson Y.R."/>
            <person name="Agabian N."/>
            <person name="Magee P.T."/>
            <person name="Davis R.W."/>
            <person name="Scherer S."/>
        </authorList>
    </citation>
    <scope>NUCLEOTIDE SEQUENCE [LARGE SCALE GENOMIC DNA]</scope>
    <source>
        <strain>SC5314 / ATCC MYA-2876</strain>
    </source>
</reference>
<reference key="3">
    <citation type="journal article" date="2007" name="Genome Biol.">
        <title>Assembly of the Candida albicans genome into sixteen supercontigs aligned on the eight chromosomes.</title>
        <authorList>
            <person name="van het Hoog M."/>
            <person name="Rast T.J."/>
            <person name="Martchenko M."/>
            <person name="Grindle S."/>
            <person name="Dignard D."/>
            <person name="Hogues H."/>
            <person name="Cuomo C."/>
            <person name="Berriman M."/>
            <person name="Scherer S."/>
            <person name="Magee B.B."/>
            <person name="Whiteway M."/>
            <person name="Chibana H."/>
            <person name="Nantel A."/>
            <person name="Magee P.T."/>
        </authorList>
    </citation>
    <scope>GENOME REANNOTATION</scope>
    <source>
        <strain>SC5314 / ATCC MYA-2876</strain>
    </source>
</reference>
<reference key="4">
    <citation type="journal article" date="2013" name="Genome Biol.">
        <title>Assembly of a phased diploid Candida albicans genome facilitates allele-specific measurements and provides a simple model for repeat and indel structure.</title>
        <authorList>
            <person name="Muzzey D."/>
            <person name="Schwartz K."/>
            <person name="Weissman J.S."/>
            <person name="Sherlock G."/>
        </authorList>
    </citation>
    <scope>NUCLEOTIDE SEQUENCE [LARGE SCALE GENOMIC DNA]</scope>
    <scope>GENOME REANNOTATION</scope>
    <source>
        <strain>SC5314 / ATCC MYA-2876</strain>
    </source>
</reference>
<reference key="5">
    <citation type="journal article" date="2007" name="J. Mol. Biol.">
        <title>The crystal and solution studies of glucosamine-6-phosphate synthase from Candida albicans.</title>
        <authorList>
            <person name="Raczynska J."/>
            <person name="Olchowy J."/>
            <person name="Konariev P.V."/>
            <person name="Svergun D.I."/>
            <person name="Milewski S."/>
            <person name="Rypniewski W."/>
        </authorList>
    </citation>
    <scope>X-RAY CRYSTALLOGRAPHY (1.8 ANGSTROMS) OF 347-713</scope>
    <scope>SUBUNIT</scope>
</reference>
<proteinExistence type="evidence at protein level"/>
<sequence length="713" mass="79254">MCGIFGYVNFLVDKSKGEIIDNLIEGLQRLEYRGYDSAGIAVDGKLTKDPSNGDEEYMDSIIIKTTGKVKVLKQKIIDDQIDRSAIFDNHVGIAHTRWATHGQPKTENCHPHKSDPKGEFIVVHNGIITNYAALRKYLLSKGHVFESETDTECIAKLFKHFYDLNVKAGVFPDLNELTKQVLHELEGSYGLLVKSYHYPGEVCGTRKGSPLLVGVKTDKKLKVDFVDVEFEAQQQHRPQQPQINHNGATSAAELGFIPVAPGEQNLRTSQSRAFLSEDDLPMPVEFFLSSDPASVVQHTKKVLFLEDDDIAHIYDGELRIHRASTKSAGESTVRPIQTLEMELNEIMKGPYKHFMQKEIFEQPDSAFNTMRGRIDFENCVVTLGGLKSWLSTIRRCRRIIMIACGTSYHSCLATRSIFEELTEIPVSVELASDFLDRRSPVFRDDTCVFVSQSGETADSILALQYCLERGALTVGIVNSVGSSMSRQTHCGVHINAGPEIGVASTKAYTSQYIALVMFALSLSNDSISRKGRHEEIIKGLQKIPEQIKQVLKLENKIKDLCNSSLNDQKSLLLLGRGYQFATALEGALKIKEISYMHSEGVLAGELKHGILALVDEDLPIIAFATRDSLFPKVMSAIEQVTARDGRPIVICNEGDAIISNDKVHTTLEVPETVDCLQGLLNVIPLQLISYWLAVNRGIDVDFPRNLAKSVTVE</sequence>